<proteinExistence type="uncertain"/>
<evidence type="ECO:0000305" key="1"/>
<name>YBFG_ECOLI</name>
<accession>P37003</accession>
<accession>P37004</accession>
<accession>P75738</accession>
<sequence length="216" mass="24604">MREMNQLVNTEDSAWPIIQNWLKDATNHTELLPVNKDLAETALYQLQVTTKSPMGALVYGSGGLLIDNGXLRIAGSGHPRLPRDPVSWTQRPEFAGVRALPIADDVAGVIFALNGGDLGEDTGCVYYFAPDTLNWESLEVGYSEFLQWALSGDLDTFYENVRWQQWREDVIKLSATEAFTFYPFLWVQSEEARTRKVISLTELWEMQYQMKETFTQ</sequence>
<reference key="1">
    <citation type="journal article" date="1994" name="J. Bacteriol.">
        <title>Molecular cloning and characterization of the pgm gene encoding phosphoglucomutase of Escherichia coli.</title>
        <authorList>
            <person name="Lu M."/>
            <person name="Kleckner N."/>
        </authorList>
    </citation>
    <scope>NUCLEOTIDE SEQUENCE [GENOMIC DNA]</scope>
    <source>
        <strain>K12</strain>
    </source>
</reference>
<reference key="2">
    <citation type="journal article" date="1996" name="DNA Res.">
        <title>A 718-kb DNA sequence of the Escherichia coli K-12 genome corresponding to the 12.7-28.0 min region on the linkage map.</title>
        <authorList>
            <person name="Oshima T."/>
            <person name="Aiba H."/>
            <person name="Baba T."/>
            <person name="Fujita K."/>
            <person name="Hayashi K."/>
            <person name="Honjo A."/>
            <person name="Ikemoto K."/>
            <person name="Inada T."/>
            <person name="Itoh T."/>
            <person name="Kajihara M."/>
            <person name="Kanai K."/>
            <person name="Kashimoto K."/>
            <person name="Kimura S."/>
            <person name="Kitagawa M."/>
            <person name="Makino K."/>
            <person name="Masuda S."/>
            <person name="Miki T."/>
            <person name="Mizobuchi K."/>
            <person name="Mori H."/>
            <person name="Motomura K."/>
            <person name="Nakamura Y."/>
            <person name="Nashimoto H."/>
            <person name="Nishio Y."/>
            <person name="Saito N."/>
            <person name="Sampei G."/>
            <person name="Seki Y."/>
            <person name="Tagami H."/>
            <person name="Takemoto K."/>
            <person name="Wada C."/>
            <person name="Yamamoto Y."/>
            <person name="Yano M."/>
            <person name="Horiuchi T."/>
        </authorList>
    </citation>
    <scope>NUCLEOTIDE SEQUENCE [LARGE SCALE GENOMIC DNA]</scope>
    <source>
        <strain>K12 / W3110 / ATCC 27325 / DSM 5911</strain>
    </source>
</reference>
<reference key="3">
    <citation type="journal article" date="1997" name="Science">
        <title>The complete genome sequence of Escherichia coli K-12.</title>
        <authorList>
            <person name="Blattner F.R."/>
            <person name="Plunkett G. III"/>
            <person name="Bloch C.A."/>
            <person name="Perna N.T."/>
            <person name="Burland V."/>
            <person name="Riley M."/>
            <person name="Collado-Vides J."/>
            <person name="Glasner J.D."/>
            <person name="Rode C.K."/>
            <person name="Mayhew G.F."/>
            <person name="Gregor J."/>
            <person name="Davis N.W."/>
            <person name="Kirkpatrick H.A."/>
            <person name="Goeden M.A."/>
            <person name="Rose D.J."/>
            <person name="Mau B."/>
            <person name="Shao Y."/>
        </authorList>
    </citation>
    <scope>NUCLEOTIDE SEQUENCE [LARGE SCALE GENOMIC DNA]</scope>
    <source>
        <strain>K12 / MG1655 / ATCC 47076</strain>
    </source>
</reference>
<reference key="4">
    <citation type="journal article" date="2006" name="Mol. Syst. Biol.">
        <title>Highly accurate genome sequences of Escherichia coli K-12 strains MG1655 and W3110.</title>
        <authorList>
            <person name="Hayashi K."/>
            <person name="Morooka N."/>
            <person name="Yamamoto Y."/>
            <person name="Fujita K."/>
            <person name="Isono K."/>
            <person name="Choi S."/>
            <person name="Ohtsubo E."/>
            <person name="Baba T."/>
            <person name="Wanner B.L."/>
            <person name="Mori H."/>
            <person name="Horiuchi T."/>
        </authorList>
    </citation>
    <scope>NUCLEOTIDE SEQUENCE [LARGE SCALE GENOMIC DNA]</scope>
    <source>
        <strain>K12 / W3110 / ATCC 27325 / DSM 5911</strain>
    </source>
</reference>
<organism>
    <name type="scientific">Escherichia coli (strain K12)</name>
    <dbReference type="NCBI Taxonomy" id="83333"/>
    <lineage>
        <taxon>Bacteria</taxon>
        <taxon>Pseudomonadati</taxon>
        <taxon>Pseudomonadota</taxon>
        <taxon>Gammaproteobacteria</taxon>
        <taxon>Enterobacterales</taxon>
        <taxon>Enterobacteriaceae</taxon>
        <taxon>Escherichia</taxon>
    </lineage>
</organism>
<comment type="caution">
    <text evidence="1">Could be the product of a pseudogene.</text>
</comment>
<comment type="sequence caution" evidence="1">
    <conflict type="frameshift">
        <sequence resource="EMBL-CDS" id="BAA35338"/>
    </conflict>
</comment>
<comment type="sequence caution" evidence="1">
    <conflict type="frameshift">
        <sequence resource="EMBL-CDS" id="BAA35347"/>
    </conflict>
</comment>
<comment type="sequence caution" evidence="1">
    <conflict type="frameshift">
        <sequence resource="EMBL" id="U00096"/>
    </conflict>
</comment>
<comment type="sequence caution" evidence="1">
    <conflict type="frameshift">
        <sequence resource="EMBL" id="U08369"/>
    </conflict>
</comment>
<keyword id="KW-1185">Reference proteome</keyword>
<dbReference type="EMBL" id="U08369">
    <property type="status" value="NOT_ANNOTATED_CDS"/>
    <property type="molecule type" value="Genomic_DNA"/>
</dbReference>
<dbReference type="EMBL" id="U00096">
    <property type="status" value="NOT_ANNOTATED_CDS"/>
    <property type="molecule type" value="Genomic_DNA"/>
</dbReference>
<dbReference type="EMBL" id="AP009048">
    <property type="protein sequence ID" value="BAA35338.2"/>
    <property type="status" value="ALT_FRAME"/>
    <property type="molecule type" value="Genomic_DNA"/>
</dbReference>
<dbReference type="EMBL" id="AP009048">
    <property type="protein sequence ID" value="BAA35347.2"/>
    <property type="status" value="ALT_FRAME"/>
    <property type="molecule type" value="Genomic_DNA"/>
</dbReference>
<dbReference type="PIR" id="A64804">
    <property type="entry name" value="A64804"/>
</dbReference>
<dbReference type="PIR" id="B64804">
    <property type="entry name" value="B64804"/>
</dbReference>
<dbReference type="BioGRID" id="4259929">
    <property type="interactions" value="5"/>
</dbReference>
<dbReference type="BioGRID" id="4259930">
    <property type="interactions" value="16"/>
</dbReference>
<dbReference type="FunCoup" id="P37003">
    <property type="interactions" value="109"/>
</dbReference>
<dbReference type="IntAct" id="P37003">
    <property type="interactions" value="1"/>
</dbReference>
<dbReference type="KEGG" id="ecj:JW5094"/>
<dbReference type="KEGG" id="ecj:JW5095"/>
<dbReference type="EchoBASE" id="EB1726"/>
<dbReference type="eggNOG" id="ENOG502ZBPN">
    <property type="taxonomic scope" value="Bacteria"/>
</dbReference>
<dbReference type="HOGENOM" id="CLU_2048160_0_0_6"/>
<dbReference type="InParanoid" id="P37003"/>
<dbReference type="PhylomeDB" id="P37003"/>
<dbReference type="Proteomes" id="UP000000625">
    <property type="component" value="Chromosome"/>
</dbReference>
<dbReference type="InterPro" id="IPR021239">
    <property type="entry name" value="DUF2625"/>
</dbReference>
<dbReference type="NCBIfam" id="NF008494">
    <property type="entry name" value="PRK11408.1-1"/>
    <property type="match status" value="1"/>
</dbReference>
<dbReference type="Pfam" id="PF10946">
    <property type="entry name" value="DUF2625"/>
    <property type="match status" value="1"/>
</dbReference>
<gene>
    <name type="primary">ybfG</name>
    <name type="ordered locus">b0691</name>
    <name type="ordered locus">JW5094/JW5095</name>
    <name type="ORF">b0690</name>
</gene>
<feature type="chain" id="PRO_0000168691" description="Putative uncharacterized protein YbfG">
    <location>
        <begin position="1"/>
        <end position="216"/>
    </location>
</feature>
<protein>
    <recommendedName>
        <fullName>Putative uncharacterized protein YbfG</fullName>
    </recommendedName>
</protein>